<reference key="1">
    <citation type="submission" date="2007-11" db="EMBL/GenBank/DDBJ databases">
        <title>Complete sequence of Delftia acidovorans DSM 14801 / SPH-1.</title>
        <authorList>
            <person name="Copeland A."/>
            <person name="Lucas S."/>
            <person name="Lapidus A."/>
            <person name="Barry K."/>
            <person name="Glavina del Rio T."/>
            <person name="Dalin E."/>
            <person name="Tice H."/>
            <person name="Pitluck S."/>
            <person name="Lowry S."/>
            <person name="Clum A."/>
            <person name="Schmutz J."/>
            <person name="Larimer F."/>
            <person name="Land M."/>
            <person name="Hauser L."/>
            <person name="Kyrpides N."/>
            <person name="Kim E."/>
            <person name="Schleheck D."/>
            <person name="Richardson P."/>
        </authorList>
    </citation>
    <scope>NUCLEOTIDE SEQUENCE [LARGE SCALE GENOMIC DNA]</scope>
    <source>
        <strain>DSM 14801 / SPH-1</strain>
    </source>
</reference>
<feature type="chain" id="PRO_0000380963" description="8-amino-7-oxononanoate synthase">
    <location>
        <begin position="1"/>
        <end position="405"/>
    </location>
</feature>
<feature type="binding site" evidence="1">
    <location>
        <position position="23"/>
    </location>
    <ligand>
        <name>substrate</name>
    </ligand>
</feature>
<feature type="binding site" evidence="1">
    <location>
        <begin position="114"/>
        <end position="115"/>
    </location>
    <ligand>
        <name>pyridoxal 5'-phosphate</name>
        <dbReference type="ChEBI" id="CHEBI:597326"/>
    </ligand>
</feature>
<feature type="binding site" evidence="1">
    <location>
        <position position="139"/>
    </location>
    <ligand>
        <name>substrate</name>
    </ligand>
</feature>
<feature type="binding site" evidence="1">
    <location>
        <position position="185"/>
    </location>
    <ligand>
        <name>pyridoxal 5'-phosphate</name>
        <dbReference type="ChEBI" id="CHEBI:597326"/>
    </ligand>
</feature>
<feature type="binding site" evidence="1">
    <location>
        <position position="213"/>
    </location>
    <ligand>
        <name>pyridoxal 5'-phosphate</name>
        <dbReference type="ChEBI" id="CHEBI:597326"/>
    </ligand>
</feature>
<feature type="binding site" evidence="1">
    <location>
        <position position="245"/>
    </location>
    <ligand>
        <name>pyridoxal 5'-phosphate</name>
        <dbReference type="ChEBI" id="CHEBI:597326"/>
    </ligand>
</feature>
<feature type="binding site" evidence="1">
    <location>
        <position position="366"/>
    </location>
    <ligand>
        <name>substrate</name>
    </ligand>
</feature>
<feature type="modified residue" description="N6-(pyridoxal phosphate)lysine" evidence="1">
    <location>
        <position position="248"/>
    </location>
</feature>
<gene>
    <name evidence="1" type="primary">bioF</name>
    <name type="ordered locus">Daci_1832</name>
</gene>
<organism>
    <name type="scientific">Delftia acidovorans (strain DSM 14801 / SPH-1)</name>
    <dbReference type="NCBI Taxonomy" id="398578"/>
    <lineage>
        <taxon>Bacteria</taxon>
        <taxon>Pseudomonadati</taxon>
        <taxon>Pseudomonadota</taxon>
        <taxon>Betaproteobacteria</taxon>
        <taxon>Burkholderiales</taxon>
        <taxon>Comamonadaceae</taxon>
        <taxon>Delftia</taxon>
    </lineage>
</organism>
<dbReference type="EC" id="2.3.1.47" evidence="1"/>
<dbReference type="EMBL" id="CP000884">
    <property type="protein sequence ID" value="ABX34472.1"/>
    <property type="molecule type" value="Genomic_DNA"/>
</dbReference>
<dbReference type="RefSeq" id="WP_012203757.1">
    <property type="nucleotide sequence ID" value="NC_010002.1"/>
</dbReference>
<dbReference type="SMR" id="A9BV10"/>
<dbReference type="STRING" id="398578.Daci_1832"/>
<dbReference type="GeneID" id="24119024"/>
<dbReference type="KEGG" id="dac:Daci_1832"/>
<dbReference type="eggNOG" id="COG0156">
    <property type="taxonomic scope" value="Bacteria"/>
</dbReference>
<dbReference type="HOGENOM" id="CLU_015846_11_2_4"/>
<dbReference type="UniPathway" id="UPA00078"/>
<dbReference type="Proteomes" id="UP000000784">
    <property type="component" value="Chromosome"/>
</dbReference>
<dbReference type="GO" id="GO:0008710">
    <property type="term" value="F:8-amino-7-oxononanoate synthase activity"/>
    <property type="evidence" value="ECO:0007669"/>
    <property type="project" value="UniProtKB-UniRule"/>
</dbReference>
<dbReference type="GO" id="GO:0030170">
    <property type="term" value="F:pyridoxal phosphate binding"/>
    <property type="evidence" value="ECO:0007669"/>
    <property type="project" value="UniProtKB-UniRule"/>
</dbReference>
<dbReference type="GO" id="GO:0009102">
    <property type="term" value="P:biotin biosynthetic process"/>
    <property type="evidence" value="ECO:0007669"/>
    <property type="project" value="UniProtKB-UniRule"/>
</dbReference>
<dbReference type="Gene3D" id="3.90.1150.10">
    <property type="entry name" value="Aspartate Aminotransferase, domain 1"/>
    <property type="match status" value="1"/>
</dbReference>
<dbReference type="Gene3D" id="3.40.640.10">
    <property type="entry name" value="Type I PLP-dependent aspartate aminotransferase-like (Major domain)"/>
    <property type="match status" value="1"/>
</dbReference>
<dbReference type="HAMAP" id="MF_01693">
    <property type="entry name" value="BioF_aminotrans_2"/>
    <property type="match status" value="1"/>
</dbReference>
<dbReference type="InterPro" id="IPR004839">
    <property type="entry name" value="Aminotransferase_I/II_large"/>
</dbReference>
<dbReference type="InterPro" id="IPR050087">
    <property type="entry name" value="AON_synthase_class-II"/>
</dbReference>
<dbReference type="InterPro" id="IPR004723">
    <property type="entry name" value="AONS_Archaea/Proteobacteria"/>
</dbReference>
<dbReference type="InterPro" id="IPR022834">
    <property type="entry name" value="AONS_Proteobacteria"/>
</dbReference>
<dbReference type="InterPro" id="IPR015424">
    <property type="entry name" value="PyrdxlP-dep_Trfase"/>
</dbReference>
<dbReference type="InterPro" id="IPR015421">
    <property type="entry name" value="PyrdxlP-dep_Trfase_major"/>
</dbReference>
<dbReference type="InterPro" id="IPR015422">
    <property type="entry name" value="PyrdxlP-dep_Trfase_small"/>
</dbReference>
<dbReference type="NCBIfam" id="TIGR00858">
    <property type="entry name" value="bioF"/>
    <property type="match status" value="1"/>
</dbReference>
<dbReference type="PANTHER" id="PTHR13693:SF100">
    <property type="entry name" value="8-AMINO-7-OXONONANOATE SYNTHASE"/>
    <property type="match status" value="1"/>
</dbReference>
<dbReference type="PANTHER" id="PTHR13693">
    <property type="entry name" value="CLASS II AMINOTRANSFERASE/8-AMINO-7-OXONONANOATE SYNTHASE"/>
    <property type="match status" value="1"/>
</dbReference>
<dbReference type="Pfam" id="PF00155">
    <property type="entry name" value="Aminotran_1_2"/>
    <property type="match status" value="1"/>
</dbReference>
<dbReference type="SUPFAM" id="SSF53383">
    <property type="entry name" value="PLP-dependent transferases"/>
    <property type="match status" value="1"/>
</dbReference>
<evidence type="ECO:0000255" key="1">
    <source>
        <dbReference type="HAMAP-Rule" id="MF_01693"/>
    </source>
</evidence>
<name>BIOF_DELAS</name>
<accession>A9BV10</accession>
<comment type="function">
    <text evidence="1">Catalyzes the decarboxylative condensation of pimeloyl-[acyl-carrier protein] and L-alanine to produce 8-amino-7-oxononanoate (AON), [acyl-carrier protein], and carbon dioxide.</text>
</comment>
<comment type="catalytic activity">
    <reaction evidence="1">
        <text>6-carboxyhexanoyl-[ACP] + L-alanine + H(+) = (8S)-8-amino-7-oxononanoate + holo-[ACP] + CO2</text>
        <dbReference type="Rhea" id="RHEA:42288"/>
        <dbReference type="Rhea" id="RHEA-COMP:9685"/>
        <dbReference type="Rhea" id="RHEA-COMP:9955"/>
        <dbReference type="ChEBI" id="CHEBI:15378"/>
        <dbReference type="ChEBI" id="CHEBI:16526"/>
        <dbReference type="ChEBI" id="CHEBI:57972"/>
        <dbReference type="ChEBI" id="CHEBI:64479"/>
        <dbReference type="ChEBI" id="CHEBI:78846"/>
        <dbReference type="ChEBI" id="CHEBI:149468"/>
        <dbReference type="EC" id="2.3.1.47"/>
    </reaction>
</comment>
<comment type="cofactor">
    <cofactor evidence="1">
        <name>pyridoxal 5'-phosphate</name>
        <dbReference type="ChEBI" id="CHEBI:597326"/>
    </cofactor>
</comment>
<comment type="pathway">
    <text evidence="1">Cofactor biosynthesis; biotin biosynthesis.</text>
</comment>
<comment type="subunit">
    <text evidence="1">Homodimer.</text>
</comment>
<comment type="similarity">
    <text evidence="1">Belongs to the class-II pyridoxal-phosphate-dependent aminotransferase family. BioF subfamily.</text>
</comment>
<keyword id="KW-0093">Biotin biosynthesis</keyword>
<keyword id="KW-0663">Pyridoxal phosphate</keyword>
<keyword id="KW-1185">Reference proteome</keyword>
<keyword id="KW-0808">Transferase</keyword>
<protein>
    <recommendedName>
        <fullName evidence="1">8-amino-7-oxononanoate synthase</fullName>
        <shortName evidence="1">AONS</shortName>
        <ecNumber evidence="1">2.3.1.47</ecNumber>
    </recommendedName>
    <alternativeName>
        <fullName evidence="1">7-keto-8-amino-pelargonic acid synthase</fullName>
        <shortName evidence="1">7-KAP synthase</shortName>
        <shortName evidence="1">KAPA synthase</shortName>
    </alternativeName>
    <alternativeName>
        <fullName evidence="1">8-amino-7-ketopelargonate synthase</fullName>
    </alternativeName>
</protein>
<sequence>MSGSWLDEIPARIAELDAAHLRRRRRATAPLQGAASGAHMEVDGHPMLAFCSNDYLGLAGHPTLVRAACAGAQAFGVGSGGSPLVSGHSTANAALEEQLAHFVQLPRALYFYAGYATNAGIVPALVGAGDALFSDALNHACLIDGARLSRAHVHRYAHADLGDLAAQLAASTARRKLVISDAVFSMDGNVADIRGLLALCDQYDALLLLDDAHGFGVLGPQGRGSLAEAGLTGANASPRVLYMATLGKAAGVAGAFVAGSDMLVEWLLQKTRSYIFATAAPPMLASALQASVALIEAEDERREALAERIAELRAGLTPLLARTGWQLLPSRTAVQALVIGSNATALAVMEGLRERGLWVPAIRPPTVPEGTARLRIALSASHTRIDVQLLLTALDEVSRLAPPLP</sequence>
<proteinExistence type="inferred from homology"/>